<comment type="catalytic activity">
    <reaction evidence="1">
        <text>1-(2-carboxyphenylamino)-1-deoxy-D-ribulose 5-phosphate + H(+) = (1S,2R)-1-C-(indol-3-yl)glycerol 3-phosphate + CO2 + H2O</text>
        <dbReference type="Rhea" id="RHEA:23476"/>
        <dbReference type="ChEBI" id="CHEBI:15377"/>
        <dbReference type="ChEBI" id="CHEBI:15378"/>
        <dbReference type="ChEBI" id="CHEBI:16526"/>
        <dbReference type="ChEBI" id="CHEBI:58613"/>
        <dbReference type="ChEBI" id="CHEBI:58866"/>
        <dbReference type="EC" id="4.1.1.48"/>
    </reaction>
</comment>
<comment type="pathway">
    <text evidence="1">Amino-acid biosynthesis; L-tryptophan biosynthesis; L-tryptophan from chorismate: step 4/5.</text>
</comment>
<comment type="similarity">
    <text evidence="1">Belongs to the TrpC family.</text>
</comment>
<name>TRPC_LISW6</name>
<dbReference type="EC" id="4.1.1.48" evidence="1"/>
<dbReference type="EMBL" id="AM263198">
    <property type="protein sequence ID" value="CAK21064.1"/>
    <property type="molecule type" value="Genomic_DNA"/>
</dbReference>
<dbReference type="RefSeq" id="WP_011702430.1">
    <property type="nucleotide sequence ID" value="NC_008555.1"/>
</dbReference>
<dbReference type="SMR" id="A0AJ82"/>
<dbReference type="STRING" id="386043.lwe1646"/>
<dbReference type="GeneID" id="61189522"/>
<dbReference type="KEGG" id="lwe:lwe1646"/>
<dbReference type="eggNOG" id="COG0134">
    <property type="taxonomic scope" value="Bacteria"/>
</dbReference>
<dbReference type="HOGENOM" id="CLU_034247_2_1_9"/>
<dbReference type="OrthoDB" id="9804217at2"/>
<dbReference type="UniPathway" id="UPA00035">
    <property type="reaction ID" value="UER00043"/>
</dbReference>
<dbReference type="Proteomes" id="UP000000779">
    <property type="component" value="Chromosome"/>
</dbReference>
<dbReference type="GO" id="GO:0004425">
    <property type="term" value="F:indole-3-glycerol-phosphate synthase activity"/>
    <property type="evidence" value="ECO:0007669"/>
    <property type="project" value="UniProtKB-UniRule"/>
</dbReference>
<dbReference type="GO" id="GO:0004640">
    <property type="term" value="F:phosphoribosylanthranilate isomerase activity"/>
    <property type="evidence" value="ECO:0007669"/>
    <property type="project" value="TreeGrafter"/>
</dbReference>
<dbReference type="GO" id="GO:0000162">
    <property type="term" value="P:L-tryptophan biosynthetic process"/>
    <property type="evidence" value="ECO:0007669"/>
    <property type="project" value="UniProtKB-UniRule"/>
</dbReference>
<dbReference type="CDD" id="cd00331">
    <property type="entry name" value="IGPS"/>
    <property type="match status" value="1"/>
</dbReference>
<dbReference type="FunFam" id="3.20.20.70:FF:000024">
    <property type="entry name" value="Indole-3-glycerol phosphate synthase"/>
    <property type="match status" value="1"/>
</dbReference>
<dbReference type="Gene3D" id="3.20.20.70">
    <property type="entry name" value="Aldolase class I"/>
    <property type="match status" value="1"/>
</dbReference>
<dbReference type="HAMAP" id="MF_00134_B">
    <property type="entry name" value="IGPS_B"/>
    <property type="match status" value="1"/>
</dbReference>
<dbReference type="InterPro" id="IPR013785">
    <property type="entry name" value="Aldolase_TIM"/>
</dbReference>
<dbReference type="InterPro" id="IPR045186">
    <property type="entry name" value="Indole-3-glycerol_P_synth"/>
</dbReference>
<dbReference type="InterPro" id="IPR013798">
    <property type="entry name" value="Indole-3-glycerol_P_synth_dom"/>
</dbReference>
<dbReference type="InterPro" id="IPR001468">
    <property type="entry name" value="Indole-3-GlycerolPSynthase_CS"/>
</dbReference>
<dbReference type="InterPro" id="IPR011060">
    <property type="entry name" value="RibuloseP-bd_barrel"/>
</dbReference>
<dbReference type="NCBIfam" id="NF001371">
    <property type="entry name" value="PRK00278.1-3"/>
    <property type="match status" value="1"/>
</dbReference>
<dbReference type="NCBIfam" id="NF001377">
    <property type="entry name" value="PRK00278.2-4"/>
    <property type="match status" value="1"/>
</dbReference>
<dbReference type="PANTHER" id="PTHR22854:SF2">
    <property type="entry name" value="INDOLE-3-GLYCEROL-PHOSPHATE SYNTHASE"/>
    <property type="match status" value="1"/>
</dbReference>
<dbReference type="PANTHER" id="PTHR22854">
    <property type="entry name" value="TRYPTOPHAN BIOSYNTHESIS PROTEIN"/>
    <property type="match status" value="1"/>
</dbReference>
<dbReference type="Pfam" id="PF00218">
    <property type="entry name" value="IGPS"/>
    <property type="match status" value="1"/>
</dbReference>
<dbReference type="SUPFAM" id="SSF51366">
    <property type="entry name" value="Ribulose-phoshate binding barrel"/>
    <property type="match status" value="1"/>
</dbReference>
<dbReference type="PROSITE" id="PS00614">
    <property type="entry name" value="IGPS"/>
    <property type="match status" value="1"/>
</dbReference>
<protein>
    <recommendedName>
        <fullName evidence="1">Indole-3-glycerol phosphate synthase</fullName>
        <shortName evidence="1">IGPS</shortName>
        <ecNumber evidence="1">4.1.1.48</ecNumber>
    </recommendedName>
</protein>
<keyword id="KW-0028">Amino-acid biosynthesis</keyword>
<keyword id="KW-0057">Aromatic amino acid biosynthesis</keyword>
<keyword id="KW-0210">Decarboxylase</keyword>
<keyword id="KW-0456">Lyase</keyword>
<keyword id="KW-0822">Tryptophan biosynthesis</keyword>
<organism>
    <name type="scientific">Listeria welshimeri serovar 6b (strain ATCC 35897 / DSM 20650 / CCUG 15529 / CIP 8149 / NCTC 11857 / SLCC 5334 / V8)</name>
    <dbReference type="NCBI Taxonomy" id="386043"/>
    <lineage>
        <taxon>Bacteria</taxon>
        <taxon>Bacillati</taxon>
        <taxon>Bacillota</taxon>
        <taxon>Bacilli</taxon>
        <taxon>Bacillales</taxon>
        <taxon>Listeriaceae</taxon>
        <taxon>Listeria</taxon>
    </lineage>
</organism>
<evidence type="ECO:0000255" key="1">
    <source>
        <dbReference type="HAMAP-Rule" id="MF_00134"/>
    </source>
</evidence>
<feature type="chain" id="PRO_1000018495" description="Indole-3-glycerol phosphate synthase">
    <location>
        <begin position="1"/>
        <end position="252"/>
    </location>
</feature>
<reference key="1">
    <citation type="journal article" date="2006" name="J. Bacteriol.">
        <title>Whole-genome sequence of Listeria welshimeri reveals common steps in genome reduction with Listeria innocua as compared to Listeria monocytogenes.</title>
        <authorList>
            <person name="Hain T."/>
            <person name="Steinweg C."/>
            <person name="Kuenne C.T."/>
            <person name="Billion A."/>
            <person name="Ghai R."/>
            <person name="Chatterjee S.S."/>
            <person name="Domann E."/>
            <person name="Kaerst U."/>
            <person name="Goesmann A."/>
            <person name="Bekel T."/>
            <person name="Bartels D."/>
            <person name="Kaiser O."/>
            <person name="Meyer F."/>
            <person name="Puehler A."/>
            <person name="Weisshaar B."/>
            <person name="Wehland J."/>
            <person name="Liang C."/>
            <person name="Dandekar T."/>
            <person name="Lampidis R."/>
            <person name="Kreft J."/>
            <person name="Goebel W."/>
            <person name="Chakraborty T."/>
        </authorList>
    </citation>
    <scope>NUCLEOTIDE SEQUENCE [LARGE SCALE GENOMIC DNA]</scope>
    <source>
        <strain>ATCC 35897 / DSM 20650 / CCUG 15529 / CIP 8149 / NCTC 11857 / SLCC 5334 / V8</strain>
    </source>
</reference>
<accession>A0AJ82</accession>
<gene>
    <name evidence="1" type="primary">trpC</name>
    <name type="ordered locus">lwe1646</name>
</gene>
<proteinExistence type="inferred from homology"/>
<sequence length="252" mass="27909">MTFLEEILAQKVIEVAEMPLEKVKDKRETYSFYDFLKAHPEKMQLIAEVKRASPSKGEINMGVDPVTQAKSYEAAGAGMISVLTDPVFFKGSIEDLREVARNVKIPVICKDFIISEKQLIRARNAGATVVLLIISALSEAALKTLFEQATALDLEVLVEVHDQKELAIAQKLGAKLIGVNNRNLHTFEVDIAVSEKLARDFSTNVCFISESGFKTAEDVGRVSKEYNAVLVGEALMREKSPEVAAKRLKVKR</sequence>